<evidence type="ECO:0000255" key="1">
    <source>
        <dbReference type="HAMAP-Rule" id="MF_00367"/>
    </source>
</evidence>
<evidence type="ECO:0000255" key="2">
    <source>
        <dbReference type="PROSITE-ProRule" id="PRU01050"/>
    </source>
</evidence>
<keyword id="KW-1003">Cell membrane</keyword>
<keyword id="KW-0963">Cytoplasm</keyword>
<keyword id="KW-0342">GTP-binding</keyword>
<keyword id="KW-0472">Membrane</keyword>
<keyword id="KW-0547">Nucleotide-binding</keyword>
<keyword id="KW-0690">Ribosome biogenesis</keyword>
<keyword id="KW-0694">RNA-binding</keyword>
<keyword id="KW-0699">rRNA-binding</keyword>
<name>ERA_LISMC</name>
<sequence>MSEPFKSGFVAIVGRPNVGKSTLLNHIIGQKIAIMSDKAQTTRNKVQGVYTTDESQIIFIDTPGIHKPKHKLGDFMVKIALNTFQEVDLIYFVIDASTGFGRGDEFIIEKLKNVQTPVFLLINKIDLIAPEDLFKLIEQYRDLMDFDEIIPISALQGNNVPNLLEQTNANLEIGPMYYPKDQITDHPERFIISELIREQVLQLTREEVPHSVAVVIEGIEKNPKTEKLTINATIIVERSTQKGIIIGKQGQMLKQIGMRARKEIERLLGSKVFLEIWVKVQKNWRDKEHYLQDYGFDREEY</sequence>
<proteinExistence type="inferred from homology"/>
<protein>
    <recommendedName>
        <fullName evidence="1">GTPase Era</fullName>
    </recommendedName>
</protein>
<accession>C1KVA9</accession>
<gene>
    <name evidence="1" type="primary">era</name>
    <name type="ordered locus">Lm4b_01472</name>
</gene>
<comment type="function">
    <text evidence="1">An essential GTPase that binds both GDP and GTP, with rapid nucleotide exchange. Plays a role in 16S rRNA processing and 30S ribosomal subunit biogenesis and possibly also in cell cycle regulation and energy metabolism.</text>
</comment>
<comment type="subunit">
    <text evidence="1">Monomer.</text>
</comment>
<comment type="subcellular location">
    <subcellularLocation>
        <location>Cytoplasm</location>
    </subcellularLocation>
    <subcellularLocation>
        <location evidence="1">Cell membrane</location>
        <topology evidence="1">Peripheral membrane protein</topology>
    </subcellularLocation>
</comment>
<comment type="similarity">
    <text evidence="1 2">Belongs to the TRAFAC class TrmE-Era-EngA-EngB-Septin-like GTPase superfamily. Era GTPase family.</text>
</comment>
<feature type="chain" id="PRO_1000205546" description="GTPase Era">
    <location>
        <begin position="1"/>
        <end position="301"/>
    </location>
</feature>
<feature type="domain" description="Era-type G" evidence="2">
    <location>
        <begin position="6"/>
        <end position="173"/>
    </location>
</feature>
<feature type="domain" description="KH type-2" evidence="1">
    <location>
        <begin position="204"/>
        <end position="282"/>
    </location>
</feature>
<feature type="region of interest" description="G1" evidence="2">
    <location>
        <begin position="14"/>
        <end position="21"/>
    </location>
</feature>
<feature type="region of interest" description="G2" evidence="2">
    <location>
        <begin position="40"/>
        <end position="44"/>
    </location>
</feature>
<feature type="region of interest" description="G3" evidence="2">
    <location>
        <begin position="61"/>
        <end position="64"/>
    </location>
</feature>
<feature type="region of interest" description="G4" evidence="2">
    <location>
        <begin position="123"/>
        <end position="126"/>
    </location>
</feature>
<feature type="region of interest" description="G5" evidence="2">
    <location>
        <begin position="152"/>
        <end position="154"/>
    </location>
</feature>
<feature type="binding site" evidence="1">
    <location>
        <begin position="14"/>
        <end position="21"/>
    </location>
    <ligand>
        <name>GTP</name>
        <dbReference type="ChEBI" id="CHEBI:37565"/>
    </ligand>
</feature>
<feature type="binding site" evidence="1">
    <location>
        <begin position="61"/>
        <end position="65"/>
    </location>
    <ligand>
        <name>GTP</name>
        <dbReference type="ChEBI" id="CHEBI:37565"/>
    </ligand>
</feature>
<feature type="binding site" evidence="1">
    <location>
        <begin position="123"/>
        <end position="126"/>
    </location>
    <ligand>
        <name>GTP</name>
        <dbReference type="ChEBI" id="CHEBI:37565"/>
    </ligand>
</feature>
<reference key="1">
    <citation type="journal article" date="2012" name="BMC Genomics">
        <title>Comparative genomics and transcriptomics of lineages I, II, and III strains of Listeria monocytogenes.</title>
        <authorList>
            <person name="Hain T."/>
            <person name="Ghai R."/>
            <person name="Billion A."/>
            <person name="Kuenne C.T."/>
            <person name="Steinweg C."/>
            <person name="Izar B."/>
            <person name="Mohamed W."/>
            <person name="Mraheil M."/>
            <person name="Domann E."/>
            <person name="Schaffrath S."/>
            <person name="Karst U."/>
            <person name="Goesmann A."/>
            <person name="Oehm S."/>
            <person name="Puhler A."/>
            <person name="Merkl R."/>
            <person name="Vorwerk S."/>
            <person name="Glaser P."/>
            <person name="Garrido P."/>
            <person name="Rusniok C."/>
            <person name="Buchrieser C."/>
            <person name="Goebel W."/>
            <person name="Chakraborty T."/>
        </authorList>
    </citation>
    <scope>NUCLEOTIDE SEQUENCE [LARGE SCALE GENOMIC DNA]</scope>
    <source>
        <strain>CLIP80459</strain>
    </source>
</reference>
<dbReference type="EMBL" id="FM242711">
    <property type="protein sequence ID" value="CAS05234.1"/>
    <property type="molecule type" value="Genomic_DNA"/>
</dbReference>
<dbReference type="RefSeq" id="WP_003721968.1">
    <property type="nucleotide sequence ID" value="NC_012488.1"/>
</dbReference>
<dbReference type="SMR" id="C1KVA9"/>
<dbReference type="KEGG" id="lmc:Lm4b_01472"/>
<dbReference type="HOGENOM" id="CLU_038009_1_0_9"/>
<dbReference type="GO" id="GO:0005829">
    <property type="term" value="C:cytosol"/>
    <property type="evidence" value="ECO:0007669"/>
    <property type="project" value="TreeGrafter"/>
</dbReference>
<dbReference type="GO" id="GO:0005886">
    <property type="term" value="C:plasma membrane"/>
    <property type="evidence" value="ECO:0007669"/>
    <property type="project" value="UniProtKB-SubCell"/>
</dbReference>
<dbReference type="GO" id="GO:0005525">
    <property type="term" value="F:GTP binding"/>
    <property type="evidence" value="ECO:0007669"/>
    <property type="project" value="UniProtKB-UniRule"/>
</dbReference>
<dbReference type="GO" id="GO:0003924">
    <property type="term" value="F:GTPase activity"/>
    <property type="evidence" value="ECO:0007669"/>
    <property type="project" value="UniProtKB-UniRule"/>
</dbReference>
<dbReference type="GO" id="GO:0043024">
    <property type="term" value="F:ribosomal small subunit binding"/>
    <property type="evidence" value="ECO:0007669"/>
    <property type="project" value="TreeGrafter"/>
</dbReference>
<dbReference type="GO" id="GO:0070181">
    <property type="term" value="F:small ribosomal subunit rRNA binding"/>
    <property type="evidence" value="ECO:0007669"/>
    <property type="project" value="UniProtKB-UniRule"/>
</dbReference>
<dbReference type="GO" id="GO:0000028">
    <property type="term" value="P:ribosomal small subunit assembly"/>
    <property type="evidence" value="ECO:0007669"/>
    <property type="project" value="TreeGrafter"/>
</dbReference>
<dbReference type="CDD" id="cd04163">
    <property type="entry name" value="Era"/>
    <property type="match status" value="1"/>
</dbReference>
<dbReference type="CDD" id="cd22534">
    <property type="entry name" value="KH-II_Era"/>
    <property type="match status" value="1"/>
</dbReference>
<dbReference type="FunFam" id="3.30.300.20:FF:000003">
    <property type="entry name" value="GTPase Era"/>
    <property type="match status" value="1"/>
</dbReference>
<dbReference type="FunFam" id="3.40.50.300:FF:000094">
    <property type="entry name" value="GTPase Era"/>
    <property type="match status" value="1"/>
</dbReference>
<dbReference type="Gene3D" id="3.30.300.20">
    <property type="match status" value="1"/>
</dbReference>
<dbReference type="Gene3D" id="3.40.50.300">
    <property type="entry name" value="P-loop containing nucleotide triphosphate hydrolases"/>
    <property type="match status" value="1"/>
</dbReference>
<dbReference type="HAMAP" id="MF_00367">
    <property type="entry name" value="GTPase_Era"/>
    <property type="match status" value="1"/>
</dbReference>
<dbReference type="InterPro" id="IPR030388">
    <property type="entry name" value="G_ERA_dom"/>
</dbReference>
<dbReference type="InterPro" id="IPR006073">
    <property type="entry name" value="GTP-bd"/>
</dbReference>
<dbReference type="InterPro" id="IPR005662">
    <property type="entry name" value="GTPase_Era-like"/>
</dbReference>
<dbReference type="InterPro" id="IPR015946">
    <property type="entry name" value="KH_dom-like_a/b"/>
</dbReference>
<dbReference type="InterPro" id="IPR004044">
    <property type="entry name" value="KH_dom_type_2"/>
</dbReference>
<dbReference type="InterPro" id="IPR009019">
    <property type="entry name" value="KH_sf_prok-type"/>
</dbReference>
<dbReference type="InterPro" id="IPR027417">
    <property type="entry name" value="P-loop_NTPase"/>
</dbReference>
<dbReference type="InterPro" id="IPR005225">
    <property type="entry name" value="Small_GTP-bd"/>
</dbReference>
<dbReference type="NCBIfam" id="TIGR00436">
    <property type="entry name" value="era"/>
    <property type="match status" value="1"/>
</dbReference>
<dbReference type="NCBIfam" id="NF000908">
    <property type="entry name" value="PRK00089.1"/>
    <property type="match status" value="1"/>
</dbReference>
<dbReference type="NCBIfam" id="TIGR00231">
    <property type="entry name" value="small_GTP"/>
    <property type="match status" value="1"/>
</dbReference>
<dbReference type="PANTHER" id="PTHR42698">
    <property type="entry name" value="GTPASE ERA"/>
    <property type="match status" value="1"/>
</dbReference>
<dbReference type="PANTHER" id="PTHR42698:SF1">
    <property type="entry name" value="GTPASE ERA, MITOCHONDRIAL"/>
    <property type="match status" value="1"/>
</dbReference>
<dbReference type="Pfam" id="PF07650">
    <property type="entry name" value="KH_2"/>
    <property type="match status" value="1"/>
</dbReference>
<dbReference type="Pfam" id="PF01926">
    <property type="entry name" value="MMR_HSR1"/>
    <property type="match status" value="1"/>
</dbReference>
<dbReference type="PRINTS" id="PR00326">
    <property type="entry name" value="GTP1OBG"/>
</dbReference>
<dbReference type="SUPFAM" id="SSF52540">
    <property type="entry name" value="P-loop containing nucleoside triphosphate hydrolases"/>
    <property type="match status" value="1"/>
</dbReference>
<dbReference type="SUPFAM" id="SSF54814">
    <property type="entry name" value="Prokaryotic type KH domain (KH-domain type II)"/>
    <property type="match status" value="1"/>
</dbReference>
<dbReference type="PROSITE" id="PS51713">
    <property type="entry name" value="G_ERA"/>
    <property type="match status" value="1"/>
</dbReference>
<dbReference type="PROSITE" id="PS50823">
    <property type="entry name" value="KH_TYPE_2"/>
    <property type="match status" value="1"/>
</dbReference>
<organism>
    <name type="scientific">Listeria monocytogenes serotype 4b (strain CLIP80459)</name>
    <dbReference type="NCBI Taxonomy" id="568819"/>
    <lineage>
        <taxon>Bacteria</taxon>
        <taxon>Bacillati</taxon>
        <taxon>Bacillota</taxon>
        <taxon>Bacilli</taxon>
        <taxon>Bacillales</taxon>
        <taxon>Listeriaceae</taxon>
        <taxon>Listeria</taxon>
    </lineage>
</organism>